<sequence>MDATFPSQRNITTRPAPDRIRREKCKLAKRLRRQVGQAIADFGMIEANDKIMVCLSGGKDSYTLLDMLLQLRAKAPVPFELTAVNLDQKQPGFPKHVLPEYLSSIGVPYHIIEQDTYSVVTRVVPEGKTLCALCSRMRRGALYAYAETQGFTKIALGHHRDDMVATFFMNLFHHAKLSGMPPKLRSDNGKHVVIRPLAYVSETDIIAYADAREFPIIPCNLCGSQENLQRKQVGVMLKAWEKEYPSRIEQIARALGNIRPSQLADQSLFDFLALGRHSNTPLPNAHAWLAGDLANDTAP</sequence>
<gene>
    <name evidence="1" type="primary">ttcA</name>
    <name type="ordered locus">Xfasm12_1733</name>
</gene>
<comment type="function">
    <text evidence="1">Catalyzes the ATP-dependent 2-thiolation of cytidine in position 32 of tRNA, to form 2-thiocytidine (s(2)C32). The sulfur atoms are provided by the cysteine/cysteine desulfurase (IscS) system.</text>
</comment>
<comment type="catalytic activity">
    <reaction evidence="1">
        <text>cytidine(32) in tRNA + S-sulfanyl-L-cysteinyl-[cysteine desulfurase] + AH2 + ATP = 2-thiocytidine(32) in tRNA + L-cysteinyl-[cysteine desulfurase] + A + AMP + diphosphate + H(+)</text>
        <dbReference type="Rhea" id="RHEA:57048"/>
        <dbReference type="Rhea" id="RHEA-COMP:10288"/>
        <dbReference type="Rhea" id="RHEA-COMP:12157"/>
        <dbReference type="Rhea" id="RHEA-COMP:12158"/>
        <dbReference type="Rhea" id="RHEA-COMP:14821"/>
        <dbReference type="ChEBI" id="CHEBI:13193"/>
        <dbReference type="ChEBI" id="CHEBI:15378"/>
        <dbReference type="ChEBI" id="CHEBI:17499"/>
        <dbReference type="ChEBI" id="CHEBI:29950"/>
        <dbReference type="ChEBI" id="CHEBI:30616"/>
        <dbReference type="ChEBI" id="CHEBI:33019"/>
        <dbReference type="ChEBI" id="CHEBI:61963"/>
        <dbReference type="ChEBI" id="CHEBI:82748"/>
        <dbReference type="ChEBI" id="CHEBI:141453"/>
        <dbReference type="ChEBI" id="CHEBI:456215"/>
    </reaction>
    <physiologicalReaction direction="left-to-right" evidence="1">
        <dbReference type="Rhea" id="RHEA:57049"/>
    </physiologicalReaction>
</comment>
<comment type="cofactor">
    <cofactor evidence="1">
        <name>Mg(2+)</name>
        <dbReference type="ChEBI" id="CHEBI:18420"/>
    </cofactor>
</comment>
<comment type="cofactor">
    <cofactor evidence="1">
        <name>[4Fe-4S] cluster</name>
        <dbReference type="ChEBI" id="CHEBI:49883"/>
    </cofactor>
    <text evidence="1">Binds 1 [4Fe-4S] cluster per subunit. The cluster is chelated by three Cys residues, the fourth Fe has a free coordination site that may bind a sulfur atom transferred from the persulfide of IscS.</text>
</comment>
<comment type="pathway">
    <text evidence="1">tRNA modification.</text>
</comment>
<comment type="subunit">
    <text evidence="1">Homodimer.</text>
</comment>
<comment type="subcellular location">
    <subcellularLocation>
        <location evidence="1">Cytoplasm</location>
    </subcellularLocation>
</comment>
<comment type="miscellaneous">
    <text evidence="1">The thiolation reaction likely consists of two steps: a first activation step by ATP to form an adenylated intermediate of the target base of tRNA, and a second nucleophilic substitution step of the sulfur (S) atom supplied by the hydrosulfide attached to the Fe-S cluster.</text>
</comment>
<comment type="similarity">
    <text evidence="1">Belongs to the TtcA family.</text>
</comment>
<name>TTCA_XYLFM</name>
<accession>B0U453</accession>
<dbReference type="EC" id="2.8.1.-" evidence="1"/>
<dbReference type="EMBL" id="CP000941">
    <property type="protein sequence ID" value="ACA12632.1"/>
    <property type="molecule type" value="Genomic_DNA"/>
</dbReference>
<dbReference type="RefSeq" id="WP_004083539.1">
    <property type="nucleotide sequence ID" value="NC_010513.1"/>
</dbReference>
<dbReference type="SMR" id="B0U453"/>
<dbReference type="KEGG" id="xfm:Xfasm12_1733"/>
<dbReference type="HOGENOM" id="CLU_026481_0_0_6"/>
<dbReference type="GO" id="GO:0005737">
    <property type="term" value="C:cytoplasm"/>
    <property type="evidence" value="ECO:0007669"/>
    <property type="project" value="UniProtKB-SubCell"/>
</dbReference>
<dbReference type="GO" id="GO:0051539">
    <property type="term" value="F:4 iron, 4 sulfur cluster binding"/>
    <property type="evidence" value="ECO:0007669"/>
    <property type="project" value="UniProtKB-UniRule"/>
</dbReference>
<dbReference type="GO" id="GO:0005524">
    <property type="term" value="F:ATP binding"/>
    <property type="evidence" value="ECO:0007669"/>
    <property type="project" value="UniProtKB-UniRule"/>
</dbReference>
<dbReference type="GO" id="GO:0000287">
    <property type="term" value="F:magnesium ion binding"/>
    <property type="evidence" value="ECO:0007669"/>
    <property type="project" value="UniProtKB-UniRule"/>
</dbReference>
<dbReference type="GO" id="GO:0016783">
    <property type="term" value="F:sulfurtransferase activity"/>
    <property type="evidence" value="ECO:0007669"/>
    <property type="project" value="UniProtKB-UniRule"/>
</dbReference>
<dbReference type="GO" id="GO:0000049">
    <property type="term" value="F:tRNA binding"/>
    <property type="evidence" value="ECO:0007669"/>
    <property type="project" value="UniProtKB-KW"/>
</dbReference>
<dbReference type="GO" id="GO:0034227">
    <property type="term" value="P:tRNA thio-modification"/>
    <property type="evidence" value="ECO:0007669"/>
    <property type="project" value="UniProtKB-UniRule"/>
</dbReference>
<dbReference type="CDD" id="cd24138">
    <property type="entry name" value="TtcA-like"/>
    <property type="match status" value="1"/>
</dbReference>
<dbReference type="Gene3D" id="3.40.50.620">
    <property type="entry name" value="HUPs"/>
    <property type="match status" value="1"/>
</dbReference>
<dbReference type="HAMAP" id="MF_01850">
    <property type="entry name" value="TtcA"/>
    <property type="match status" value="1"/>
</dbReference>
<dbReference type="InterPro" id="IPR014729">
    <property type="entry name" value="Rossmann-like_a/b/a_fold"/>
</dbReference>
<dbReference type="InterPro" id="IPR011063">
    <property type="entry name" value="TilS/TtcA_N"/>
</dbReference>
<dbReference type="InterPro" id="IPR012089">
    <property type="entry name" value="tRNA_Cyd_32_2_STrfase"/>
</dbReference>
<dbReference type="InterPro" id="IPR035107">
    <property type="entry name" value="tRNA_thiolation_TtcA_Ctu1"/>
</dbReference>
<dbReference type="NCBIfam" id="NF007972">
    <property type="entry name" value="PRK10696.1"/>
    <property type="match status" value="1"/>
</dbReference>
<dbReference type="PANTHER" id="PTHR43686:SF1">
    <property type="entry name" value="AMINOTRAN_5 DOMAIN-CONTAINING PROTEIN"/>
    <property type="match status" value="1"/>
</dbReference>
<dbReference type="PANTHER" id="PTHR43686">
    <property type="entry name" value="SULFURTRANSFERASE-RELATED"/>
    <property type="match status" value="1"/>
</dbReference>
<dbReference type="Pfam" id="PF01171">
    <property type="entry name" value="ATP_bind_3"/>
    <property type="match status" value="1"/>
</dbReference>
<dbReference type="PIRSF" id="PIRSF004976">
    <property type="entry name" value="ATPase_YdaO"/>
    <property type="match status" value="1"/>
</dbReference>
<dbReference type="SUPFAM" id="SSF52402">
    <property type="entry name" value="Adenine nucleotide alpha hydrolases-like"/>
    <property type="match status" value="1"/>
</dbReference>
<protein>
    <recommendedName>
        <fullName evidence="1">tRNA-cytidine(32) 2-sulfurtransferase</fullName>
        <ecNumber evidence="1">2.8.1.-</ecNumber>
    </recommendedName>
    <alternativeName>
        <fullName evidence="1">Two-thiocytidine biosynthesis protein A</fullName>
    </alternativeName>
    <alternativeName>
        <fullName evidence="1">tRNA 2-thiocytidine biosynthesis protein TtcA</fullName>
    </alternativeName>
</protein>
<keyword id="KW-0004">4Fe-4S</keyword>
<keyword id="KW-0067">ATP-binding</keyword>
<keyword id="KW-0963">Cytoplasm</keyword>
<keyword id="KW-0408">Iron</keyword>
<keyword id="KW-0411">Iron-sulfur</keyword>
<keyword id="KW-0460">Magnesium</keyword>
<keyword id="KW-0479">Metal-binding</keyword>
<keyword id="KW-0547">Nucleotide-binding</keyword>
<keyword id="KW-0694">RNA-binding</keyword>
<keyword id="KW-0808">Transferase</keyword>
<keyword id="KW-0819">tRNA processing</keyword>
<keyword id="KW-0820">tRNA-binding</keyword>
<feature type="chain" id="PRO_0000348877" description="tRNA-cytidine(32) 2-sulfurtransferase">
    <location>
        <begin position="1"/>
        <end position="299"/>
    </location>
</feature>
<feature type="short sequence motif" description="PP-loop motif" evidence="1">
    <location>
        <begin position="56"/>
        <end position="61"/>
    </location>
</feature>
<feature type="binding site" evidence="1">
    <location>
        <position position="131"/>
    </location>
    <ligand>
        <name>[4Fe-4S] cluster</name>
        <dbReference type="ChEBI" id="CHEBI:49883"/>
    </ligand>
</feature>
<feature type="binding site" evidence="1">
    <location>
        <position position="134"/>
    </location>
    <ligand>
        <name>[4Fe-4S] cluster</name>
        <dbReference type="ChEBI" id="CHEBI:49883"/>
    </ligand>
</feature>
<feature type="binding site" evidence="1">
    <location>
        <position position="222"/>
    </location>
    <ligand>
        <name>[4Fe-4S] cluster</name>
        <dbReference type="ChEBI" id="CHEBI:49883"/>
    </ligand>
</feature>
<reference key="1">
    <citation type="journal article" date="2010" name="J. Bacteriol.">
        <title>Whole genome sequences of two Xylella fastidiosa strains (M12 and M23) causing almond leaf scorch disease in California.</title>
        <authorList>
            <person name="Chen J."/>
            <person name="Xie G."/>
            <person name="Han S."/>
            <person name="Chertkov O."/>
            <person name="Sims D."/>
            <person name="Civerolo E.L."/>
        </authorList>
    </citation>
    <scope>NUCLEOTIDE SEQUENCE [LARGE SCALE GENOMIC DNA]</scope>
    <source>
        <strain>M12</strain>
    </source>
</reference>
<evidence type="ECO:0000255" key="1">
    <source>
        <dbReference type="HAMAP-Rule" id="MF_01850"/>
    </source>
</evidence>
<organism>
    <name type="scientific">Xylella fastidiosa (strain M12)</name>
    <dbReference type="NCBI Taxonomy" id="405440"/>
    <lineage>
        <taxon>Bacteria</taxon>
        <taxon>Pseudomonadati</taxon>
        <taxon>Pseudomonadota</taxon>
        <taxon>Gammaproteobacteria</taxon>
        <taxon>Lysobacterales</taxon>
        <taxon>Lysobacteraceae</taxon>
        <taxon>Xylella</taxon>
    </lineage>
</organism>
<proteinExistence type="inferred from homology"/>